<protein>
    <recommendedName>
        <fullName>Uncharacterized protein in fumA 3'region</fullName>
    </recommendedName>
    <alternativeName>
        <fullName>ORF3</fullName>
    </alternativeName>
</protein>
<dbReference type="EMBL" id="L05611">
    <property type="protein sequence ID" value="AAA72319.1"/>
    <property type="molecule type" value="Genomic_DNA"/>
</dbReference>
<dbReference type="PIR" id="C47692">
    <property type="entry name" value="C47692"/>
</dbReference>
<dbReference type="SMR" id="Q04730"/>
<reference key="1">
    <citation type="journal article" date="1993" name="J. Gen. Microbiol.">
        <title>Molecular and enzymological evidence for two classes of fumarase in Bacillus stearothermophilus (var. non-diastaticus).</title>
        <authorList>
            <person name="Reaney S.K."/>
            <person name="Bungard S.J."/>
            <person name="Guest J.R."/>
        </authorList>
    </citation>
    <scope>NUCLEOTIDE SEQUENCE [GENOMIC DNA]</scope>
    <source>
        <strain>DSM 2334 / Var. Non-diastaticus</strain>
    </source>
</reference>
<organism>
    <name type="scientific">Geobacillus stearothermophilus</name>
    <name type="common">Bacillus stearothermophilus</name>
    <dbReference type="NCBI Taxonomy" id="1422"/>
    <lineage>
        <taxon>Bacteria</taxon>
        <taxon>Bacillati</taxon>
        <taxon>Bacillota</taxon>
        <taxon>Bacilli</taxon>
        <taxon>Bacillales</taxon>
        <taxon>Anoxybacillaceae</taxon>
        <taxon>Geobacillus</taxon>
    </lineage>
</organism>
<accession>Q04730</accession>
<sequence>MWNVTIKAAPPYDFDRVLERLSLDPLNKVDVHKRTVLVPLYSEKEEPFVAVVKAIGSKENPIFEISGEQDEQKERAIHELTRIFQWKNS</sequence>
<proteinExistence type="predicted"/>
<feature type="chain" id="PRO_0000066218" description="Uncharacterized protein in fumA 3'region">
    <location>
        <begin position="1"/>
        <end position="89" status="greater than"/>
    </location>
</feature>
<feature type="non-terminal residue">
    <location>
        <position position="89"/>
    </location>
</feature>
<name>YFU3_GEOSE</name>